<organism>
    <name type="scientific">Helicobacter pylori (strain P12)</name>
    <dbReference type="NCBI Taxonomy" id="570508"/>
    <lineage>
        <taxon>Bacteria</taxon>
        <taxon>Pseudomonadati</taxon>
        <taxon>Campylobacterota</taxon>
        <taxon>Epsilonproteobacteria</taxon>
        <taxon>Campylobacterales</taxon>
        <taxon>Helicobacteraceae</taxon>
        <taxon>Helicobacter</taxon>
    </lineage>
</organism>
<evidence type="ECO:0000255" key="1">
    <source>
        <dbReference type="HAMAP-Rule" id="MF_00252"/>
    </source>
</evidence>
<comment type="catalytic activity">
    <reaction evidence="1">
        <text>tRNA(Lys) + L-lysine + ATP = L-lysyl-tRNA(Lys) + AMP + diphosphate</text>
        <dbReference type="Rhea" id="RHEA:20792"/>
        <dbReference type="Rhea" id="RHEA-COMP:9696"/>
        <dbReference type="Rhea" id="RHEA-COMP:9697"/>
        <dbReference type="ChEBI" id="CHEBI:30616"/>
        <dbReference type="ChEBI" id="CHEBI:32551"/>
        <dbReference type="ChEBI" id="CHEBI:33019"/>
        <dbReference type="ChEBI" id="CHEBI:78442"/>
        <dbReference type="ChEBI" id="CHEBI:78529"/>
        <dbReference type="ChEBI" id="CHEBI:456215"/>
        <dbReference type="EC" id="6.1.1.6"/>
    </reaction>
</comment>
<comment type="cofactor">
    <cofactor evidence="1">
        <name>Mg(2+)</name>
        <dbReference type="ChEBI" id="CHEBI:18420"/>
    </cofactor>
    <text evidence="1">Binds 3 Mg(2+) ions per subunit.</text>
</comment>
<comment type="subunit">
    <text evidence="1">Homodimer.</text>
</comment>
<comment type="subcellular location">
    <subcellularLocation>
        <location evidence="1">Cytoplasm</location>
    </subcellularLocation>
</comment>
<comment type="similarity">
    <text evidence="1">Belongs to the class-II aminoacyl-tRNA synthetase family.</text>
</comment>
<keyword id="KW-0030">Aminoacyl-tRNA synthetase</keyword>
<keyword id="KW-0067">ATP-binding</keyword>
<keyword id="KW-0963">Cytoplasm</keyword>
<keyword id="KW-0436">Ligase</keyword>
<keyword id="KW-0460">Magnesium</keyword>
<keyword id="KW-0479">Metal-binding</keyword>
<keyword id="KW-0547">Nucleotide-binding</keyword>
<keyword id="KW-0648">Protein biosynthesis</keyword>
<sequence length="501" mass="57724">MFSNQYIQQRIHKANSLREEGKNPYQNGLKRSLTNAAFLEKYAYVKDLEEPKDKEKCESIVGRVKLLRLMGKACFIKVEDESAILQAYVSQNELNDEFKSLKKHLEVGDIVLVKGFPFATKTGELSVHALEFHILSKTIVPLPEKFHGLSDIELRYRQRYLDLIVNPSVKDVFKKRSLIVSSVRKFFEMEGFLEVETPMMHPIPGGANARPFITYHNALEVERYLRIAPELYLKRLIVGGFEAVFEINRNFRNEGMDHSHNPEFTMIEFYWAYHTYEDLIELSKRLFDYLLKTLNLDSKIIYNDMEVDFNQTSVISYLDALETIGGISRDILEKEDRLLAYLLEQGVKVEPNLTYGKLLAEAFDHFVEHQLINPTFVTQYPIEISPLARRNDSNPNIADRFELFIAGKEIANGFSELNDPLDQLERFKNQVAEKEKGDEEAQYMDEDYVWALAHGMPPTAGQGIGIDRLVMLLTGAKSIKDVILFPAMRPVKNDFNIESGE</sequence>
<gene>
    <name evidence="1" type="primary">lysS</name>
    <name type="ordered locus">HPP12_0182</name>
</gene>
<dbReference type="EC" id="6.1.1.6" evidence="1"/>
<dbReference type="EMBL" id="CP001217">
    <property type="protein sequence ID" value="ACJ07342.1"/>
    <property type="molecule type" value="Genomic_DNA"/>
</dbReference>
<dbReference type="SMR" id="B6JPT1"/>
<dbReference type="KEGG" id="hpp:HPP12_0182"/>
<dbReference type="HOGENOM" id="CLU_008255_6_0_7"/>
<dbReference type="Proteomes" id="UP000008198">
    <property type="component" value="Chromosome"/>
</dbReference>
<dbReference type="GO" id="GO:0005829">
    <property type="term" value="C:cytosol"/>
    <property type="evidence" value="ECO:0007669"/>
    <property type="project" value="TreeGrafter"/>
</dbReference>
<dbReference type="GO" id="GO:0005524">
    <property type="term" value="F:ATP binding"/>
    <property type="evidence" value="ECO:0007669"/>
    <property type="project" value="UniProtKB-UniRule"/>
</dbReference>
<dbReference type="GO" id="GO:0004824">
    <property type="term" value="F:lysine-tRNA ligase activity"/>
    <property type="evidence" value="ECO:0007669"/>
    <property type="project" value="UniProtKB-UniRule"/>
</dbReference>
<dbReference type="GO" id="GO:0000287">
    <property type="term" value="F:magnesium ion binding"/>
    <property type="evidence" value="ECO:0007669"/>
    <property type="project" value="UniProtKB-UniRule"/>
</dbReference>
<dbReference type="GO" id="GO:0000049">
    <property type="term" value="F:tRNA binding"/>
    <property type="evidence" value="ECO:0007669"/>
    <property type="project" value="TreeGrafter"/>
</dbReference>
<dbReference type="GO" id="GO:0006430">
    <property type="term" value="P:lysyl-tRNA aminoacylation"/>
    <property type="evidence" value="ECO:0007669"/>
    <property type="project" value="UniProtKB-UniRule"/>
</dbReference>
<dbReference type="CDD" id="cd00775">
    <property type="entry name" value="LysRS_core"/>
    <property type="match status" value="1"/>
</dbReference>
<dbReference type="CDD" id="cd04322">
    <property type="entry name" value="LysRS_N"/>
    <property type="match status" value="1"/>
</dbReference>
<dbReference type="FunFam" id="3.30.930.10:FF:000164">
    <property type="entry name" value="Lysine--tRNA ligase"/>
    <property type="match status" value="1"/>
</dbReference>
<dbReference type="Gene3D" id="3.30.930.10">
    <property type="entry name" value="Bira Bifunctional Protein, Domain 2"/>
    <property type="match status" value="1"/>
</dbReference>
<dbReference type="Gene3D" id="2.40.50.140">
    <property type="entry name" value="Nucleic acid-binding proteins"/>
    <property type="match status" value="1"/>
</dbReference>
<dbReference type="HAMAP" id="MF_00252">
    <property type="entry name" value="Lys_tRNA_synth_class2"/>
    <property type="match status" value="1"/>
</dbReference>
<dbReference type="InterPro" id="IPR004364">
    <property type="entry name" value="Aa-tRNA-synt_II"/>
</dbReference>
<dbReference type="InterPro" id="IPR006195">
    <property type="entry name" value="aa-tRNA-synth_II"/>
</dbReference>
<dbReference type="InterPro" id="IPR045864">
    <property type="entry name" value="aa-tRNA-synth_II/BPL/LPL"/>
</dbReference>
<dbReference type="InterPro" id="IPR002313">
    <property type="entry name" value="Lys-tRNA-ligase_II"/>
</dbReference>
<dbReference type="InterPro" id="IPR044136">
    <property type="entry name" value="Lys-tRNA-ligase_II_N"/>
</dbReference>
<dbReference type="InterPro" id="IPR018149">
    <property type="entry name" value="Lys-tRNA-synth_II_C"/>
</dbReference>
<dbReference type="InterPro" id="IPR012340">
    <property type="entry name" value="NA-bd_OB-fold"/>
</dbReference>
<dbReference type="InterPro" id="IPR004365">
    <property type="entry name" value="NA-bd_OB_tRNA"/>
</dbReference>
<dbReference type="NCBIfam" id="TIGR00499">
    <property type="entry name" value="lysS_bact"/>
    <property type="match status" value="1"/>
</dbReference>
<dbReference type="NCBIfam" id="NF001756">
    <property type="entry name" value="PRK00484.1"/>
    <property type="match status" value="1"/>
</dbReference>
<dbReference type="PANTHER" id="PTHR42918:SF15">
    <property type="entry name" value="LYSINE--TRNA LIGASE, CHLOROPLASTIC_MITOCHONDRIAL"/>
    <property type="match status" value="1"/>
</dbReference>
<dbReference type="PANTHER" id="PTHR42918">
    <property type="entry name" value="LYSYL-TRNA SYNTHETASE"/>
    <property type="match status" value="1"/>
</dbReference>
<dbReference type="Pfam" id="PF00152">
    <property type="entry name" value="tRNA-synt_2"/>
    <property type="match status" value="1"/>
</dbReference>
<dbReference type="Pfam" id="PF01336">
    <property type="entry name" value="tRNA_anti-codon"/>
    <property type="match status" value="1"/>
</dbReference>
<dbReference type="PRINTS" id="PR00982">
    <property type="entry name" value="TRNASYNTHLYS"/>
</dbReference>
<dbReference type="SUPFAM" id="SSF55681">
    <property type="entry name" value="Class II aaRS and biotin synthetases"/>
    <property type="match status" value="1"/>
</dbReference>
<dbReference type="SUPFAM" id="SSF50249">
    <property type="entry name" value="Nucleic acid-binding proteins"/>
    <property type="match status" value="1"/>
</dbReference>
<dbReference type="PROSITE" id="PS50862">
    <property type="entry name" value="AA_TRNA_LIGASE_II"/>
    <property type="match status" value="1"/>
</dbReference>
<protein>
    <recommendedName>
        <fullName evidence="1">Lysine--tRNA ligase</fullName>
        <ecNumber evidence="1">6.1.1.6</ecNumber>
    </recommendedName>
    <alternativeName>
        <fullName evidence="1">Lysyl-tRNA synthetase</fullName>
        <shortName evidence="1">LysRS</shortName>
    </alternativeName>
</protein>
<name>SYK_HELP2</name>
<accession>B6JPT1</accession>
<feature type="chain" id="PRO_1000101120" description="Lysine--tRNA ligase">
    <location>
        <begin position="1"/>
        <end position="501"/>
    </location>
</feature>
<feature type="binding site" evidence="1">
    <location>
        <position position="402"/>
    </location>
    <ligand>
        <name>Mg(2+)</name>
        <dbReference type="ChEBI" id="CHEBI:18420"/>
        <label>1</label>
    </ligand>
</feature>
<feature type="binding site" evidence="1">
    <location>
        <position position="409"/>
    </location>
    <ligand>
        <name>Mg(2+)</name>
        <dbReference type="ChEBI" id="CHEBI:18420"/>
        <label>1</label>
    </ligand>
</feature>
<feature type="binding site" evidence="1">
    <location>
        <position position="409"/>
    </location>
    <ligand>
        <name>Mg(2+)</name>
        <dbReference type="ChEBI" id="CHEBI:18420"/>
        <label>2</label>
    </ligand>
</feature>
<proteinExistence type="inferred from homology"/>
<reference key="1">
    <citation type="submission" date="2008-10" db="EMBL/GenBank/DDBJ databases">
        <title>The complete genome sequence of Helicobacter pylori strain P12.</title>
        <authorList>
            <person name="Fischer W."/>
            <person name="Windhager L."/>
            <person name="Karnholz A."/>
            <person name="Zeiller M."/>
            <person name="Zimmer R."/>
            <person name="Haas R."/>
        </authorList>
    </citation>
    <scope>NUCLEOTIDE SEQUENCE [LARGE SCALE GENOMIC DNA]</scope>
    <source>
        <strain>P12</strain>
    </source>
</reference>